<reference key="1">
    <citation type="submission" date="2008-04" db="EMBL/GenBank/DDBJ databases">
        <title>Complete sequence of chromosome of Exiguobacterium sibiricum 255-15.</title>
        <authorList>
            <consortium name="US DOE Joint Genome Institute"/>
            <person name="Copeland A."/>
            <person name="Lucas S."/>
            <person name="Lapidus A."/>
            <person name="Glavina del Rio T."/>
            <person name="Dalin E."/>
            <person name="Tice H."/>
            <person name="Bruce D."/>
            <person name="Goodwin L."/>
            <person name="Pitluck S."/>
            <person name="Kiss H."/>
            <person name="Chertkov O."/>
            <person name="Monk C."/>
            <person name="Brettin T."/>
            <person name="Detter J.C."/>
            <person name="Han C."/>
            <person name="Kuske C.R."/>
            <person name="Schmutz J."/>
            <person name="Larimer F."/>
            <person name="Land M."/>
            <person name="Hauser L."/>
            <person name="Kyrpides N."/>
            <person name="Mikhailova N."/>
            <person name="Vishnivetskaya T."/>
            <person name="Rodrigues D.F."/>
            <person name="Gilichinsky D."/>
            <person name="Tiedje J."/>
            <person name="Richardson P."/>
        </authorList>
    </citation>
    <scope>NUCLEOTIDE SEQUENCE [LARGE SCALE GENOMIC DNA]</scope>
    <source>
        <strain>DSM 17290 / CCUG 55495 / CIP 109462 / JCM 13490 / 255-15</strain>
    </source>
</reference>
<protein>
    <recommendedName>
        <fullName evidence="1">Methylthioribulose-1-phosphate dehydratase</fullName>
        <shortName evidence="1">MTRu-1-P dehydratase</shortName>
        <ecNumber evidence="1">4.2.1.109</ecNumber>
    </recommendedName>
</protein>
<dbReference type="EC" id="4.2.1.109" evidence="1"/>
<dbReference type="EMBL" id="CP001022">
    <property type="protein sequence ID" value="ACB59910.1"/>
    <property type="molecule type" value="Genomic_DNA"/>
</dbReference>
<dbReference type="RefSeq" id="WP_012369334.1">
    <property type="nucleotide sequence ID" value="NC_010556.1"/>
</dbReference>
<dbReference type="SMR" id="B1YIY0"/>
<dbReference type="STRING" id="262543.Exig_0428"/>
<dbReference type="KEGG" id="esi:Exig_0428"/>
<dbReference type="eggNOG" id="COG0235">
    <property type="taxonomic scope" value="Bacteria"/>
</dbReference>
<dbReference type="HOGENOM" id="CLU_006033_4_1_9"/>
<dbReference type="OrthoDB" id="9805559at2"/>
<dbReference type="UniPathway" id="UPA00904">
    <property type="reaction ID" value="UER00875"/>
</dbReference>
<dbReference type="Proteomes" id="UP000001681">
    <property type="component" value="Chromosome"/>
</dbReference>
<dbReference type="GO" id="GO:0005737">
    <property type="term" value="C:cytoplasm"/>
    <property type="evidence" value="ECO:0007669"/>
    <property type="project" value="InterPro"/>
</dbReference>
<dbReference type="GO" id="GO:0046570">
    <property type="term" value="F:methylthioribulose 1-phosphate dehydratase activity"/>
    <property type="evidence" value="ECO:0007669"/>
    <property type="project" value="UniProtKB-UniRule"/>
</dbReference>
<dbReference type="GO" id="GO:0008270">
    <property type="term" value="F:zinc ion binding"/>
    <property type="evidence" value="ECO:0007669"/>
    <property type="project" value="UniProtKB-UniRule"/>
</dbReference>
<dbReference type="GO" id="GO:0019509">
    <property type="term" value="P:L-methionine salvage from methylthioadenosine"/>
    <property type="evidence" value="ECO:0007669"/>
    <property type="project" value="UniProtKB-UniRule"/>
</dbReference>
<dbReference type="Gene3D" id="3.40.225.10">
    <property type="entry name" value="Class II aldolase/adducin N-terminal domain"/>
    <property type="match status" value="1"/>
</dbReference>
<dbReference type="HAMAP" id="MF_01677">
    <property type="entry name" value="Salvage_MtnB"/>
    <property type="match status" value="1"/>
</dbReference>
<dbReference type="InterPro" id="IPR001303">
    <property type="entry name" value="Aldolase_II/adducin_N"/>
</dbReference>
<dbReference type="InterPro" id="IPR036409">
    <property type="entry name" value="Aldolase_II/adducin_N_sf"/>
</dbReference>
<dbReference type="InterPro" id="IPR017714">
    <property type="entry name" value="MethylthioRu-1-P_deHdtase_MtnB"/>
</dbReference>
<dbReference type="NCBIfam" id="NF005244">
    <property type="entry name" value="PRK06754.1"/>
    <property type="match status" value="1"/>
</dbReference>
<dbReference type="NCBIfam" id="TIGR03328">
    <property type="entry name" value="salvage_mtnB"/>
    <property type="match status" value="1"/>
</dbReference>
<dbReference type="PANTHER" id="PTHR10640">
    <property type="entry name" value="METHYLTHIORIBULOSE-1-PHOSPHATE DEHYDRATASE"/>
    <property type="match status" value="1"/>
</dbReference>
<dbReference type="PANTHER" id="PTHR10640:SF7">
    <property type="entry name" value="METHYLTHIORIBULOSE-1-PHOSPHATE DEHYDRATASE"/>
    <property type="match status" value="1"/>
</dbReference>
<dbReference type="Pfam" id="PF00596">
    <property type="entry name" value="Aldolase_II"/>
    <property type="match status" value="1"/>
</dbReference>
<dbReference type="SMART" id="SM01007">
    <property type="entry name" value="Aldolase_II"/>
    <property type="match status" value="1"/>
</dbReference>
<dbReference type="SUPFAM" id="SSF53639">
    <property type="entry name" value="AraD/HMP-PK domain-like"/>
    <property type="match status" value="1"/>
</dbReference>
<organism>
    <name type="scientific">Exiguobacterium sibiricum (strain DSM 17290 / CCUG 55495 / CIP 109462 / JCM 13490 / 255-15)</name>
    <dbReference type="NCBI Taxonomy" id="262543"/>
    <lineage>
        <taxon>Bacteria</taxon>
        <taxon>Bacillati</taxon>
        <taxon>Bacillota</taxon>
        <taxon>Bacilli</taxon>
        <taxon>Bacillales</taxon>
        <taxon>Bacillales Family XII. Incertae Sedis</taxon>
        <taxon>Exiguobacterium</taxon>
    </lineage>
</organism>
<evidence type="ECO:0000255" key="1">
    <source>
        <dbReference type="HAMAP-Rule" id="MF_01677"/>
    </source>
</evidence>
<feature type="chain" id="PRO_0000357078" description="Methylthioribulose-1-phosphate dehydratase">
    <location>
        <begin position="1"/>
        <end position="206"/>
    </location>
</feature>
<feature type="binding site" evidence="1">
    <location>
        <position position="96"/>
    </location>
    <ligand>
        <name>Zn(2+)</name>
        <dbReference type="ChEBI" id="CHEBI:29105"/>
    </ligand>
</feature>
<feature type="binding site" evidence="1">
    <location>
        <position position="98"/>
    </location>
    <ligand>
        <name>Zn(2+)</name>
        <dbReference type="ChEBI" id="CHEBI:29105"/>
    </ligand>
</feature>
<gene>
    <name evidence="1" type="primary">mtnB</name>
    <name type="ordered locus">Exig_0428</name>
</gene>
<proteinExistence type="inferred from homology"/>
<accession>B1YIY0</accession>
<sequence>MTFLTRYEELRAIKQEFAARDWFPGTSGNLAIRTNSSPTEFLVTASGKDKRQDTPDDFVHVDATGQLIGEQNGRPSAETLLHVEVFNRTTAGCSLHVHTVDNNVISELYGDRGEIRFRSQEIIKALGRWEEDAEVIVPIITNHADIPTLAADFAKHIRTESGAVLIRNHGITVWAPTAFEAKKQLEAFEFLFSYTLKLQACRQAIY</sequence>
<comment type="function">
    <text evidence="1">Catalyzes the dehydration of methylthioribulose-1-phosphate (MTRu-1-P) into 2,3-diketo-5-methylthiopentyl-1-phosphate (DK-MTP-1-P).</text>
</comment>
<comment type="catalytic activity">
    <reaction evidence="1">
        <text>5-(methylsulfanyl)-D-ribulose 1-phosphate = 5-methylsulfanyl-2,3-dioxopentyl phosphate + H2O</text>
        <dbReference type="Rhea" id="RHEA:15549"/>
        <dbReference type="ChEBI" id="CHEBI:15377"/>
        <dbReference type="ChEBI" id="CHEBI:58548"/>
        <dbReference type="ChEBI" id="CHEBI:58828"/>
        <dbReference type="EC" id="4.2.1.109"/>
    </reaction>
</comment>
<comment type="cofactor">
    <cofactor evidence="1">
        <name>Zn(2+)</name>
        <dbReference type="ChEBI" id="CHEBI:29105"/>
    </cofactor>
    <text evidence="1">Binds 1 zinc ion per subunit.</text>
</comment>
<comment type="pathway">
    <text evidence="1">Amino-acid biosynthesis; L-methionine biosynthesis via salvage pathway; L-methionine from S-methyl-5-thio-alpha-D-ribose 1-phosphate: step 2/6.</text>
</comment>
<comment type="similarity">
    <text evidence="1">Belongs to the aldolase class II family. MtnB subfamily.</text>
</comment>
<name>MTNB_EXIS2</name>
<keyword id="KW-0028">Amino-acid biosynthesis</keyword>
<keyword id="KW-0456">Lyase</keyword>
<keyword id="KW-0479">Metal-binding</keyword>
<keyword id="KW-0486">Methionine biosynthesis</keyword>
<keyword id="KW-1185">Reference proteome</keyword>
<keyword id="KW-0862">Zinc</keyword>